<feature type="chain" id="PRO_0000214146" description="Protein Syd">
    <location>
        <begin position="1"/>
        <end position="182"/>
    </location>
</feature>
<evidence type="ECO:0000255" key="1">
    <source>
        <dbReference type="HAMAP-Rule" id="MF_01104"/>
    </source>
</evidence>
<evidence type="ECO:0000305" key="2"/>
<sequence length="182" mass="20746">MTQSVVQALSAFSQRFLQHCAQQTGQLPENDELLGLASPCVVEELTDVVRWRPVNREVWADFSNVERAIELTLHEDIKAFYASQFSADMPAQWRGRELTLLQVWSEDDFTRLQENILGHLVMQRRLKQKPTVFIATTEDEMAVVSVCNLSGNVILEKLGTAQREVLTADLETFLEQLEPKVN</sequence>
<reference key="1">
    <citation type="journal article" date="2000" name="Nature">
        <title>DNA sequence of both chromosomes of the cholera pathogen Vibrio cholerae.</title>
        <authorList>
            <person name="Heidelberg J.F."/>
            <person name="Eisen J.A."/>
            <person name="Nelson W.C."/>
            <person name="Clayton R.A."/>
            <person name="Gwinn M.L."/>
            <person name="Dodson R.J."/>
            <person name="Haft D.H."/>
            <person name="Hickey E.K."/>
            <person name="Peterson J.D."/>
            <person name="Umayam L.A."/>
            <person name="Gill S.R."/>
            <person name="Nelson K.E."/>
            <person name="Read T.D."/>
            <person name="Tettelin H."/>
            <person name="Richardson D.L."/>
            <person name="Ermolaeva M.D."/>
            <person name="Vamathevan J.J."/>
            <person name="Bass S."/>
            <person name="Qin H."/>
            <person name="Dragoi I."/>
            <person name="Sellers P."/>
            <person name="McDonald L.A."/>
            <person name="Utterback T.R."/>
            <person name="Fleischmann R.D."/>
            <person name="Nierman W.C."/>
            <person name="White O."/>
            <person name="Salzberg S.L."/>
            <person name="Smith H.O."/>
            <person name="Colwell R.R."/>
            <person name="Mekalanos J.J."/>
            <person name="Venter J.C."/>
            <person name="Fraser C.M."/>
        </authorList>
    </citation>
    <scope>NUCLEOTIDE SEQUENCE [LARGE SCALE GENOMIC DNA]</scope>
    <source>
        <strain>ATCC 39315 / El Tor Inaba N16961</strain>
    </source>
</reference>
<name>SYDP_VIBCH</name>
<comment type="function">
    <text evidence="1">Interacts with the SecY protein in vivo. May bind preferentially to an uncomplexed state of SecY, thus functioning either as a chelating agent for excess SecY in the cell or as a regulatory factor that negatively controls the translocase function.</text>
</comment>
<comment type="subcellular location">
    <subcellularLocation>
        <location evidence="1">Cell inner membrane</location>
        <topology evidence="1">Peripheral membrane protein</topology>
        <orientation evidence="1">Cytoplasmic side</orientation>
    </subcellularLocation>
    <text evidence="1">Loosely associated with the cytoplasmic side of the inner membrane, probably via SecY.</text>
</comment>
<comment type="similarity">
    <text evidence="1">Belongs to the Syd family.</text>
</comment>
<comment type="sequence caution" evidence="2">
    <conflict type="erroneous initiation">
        <sequence resource="EMBL-CDS" id="AAF94065"/>
    </conflict>
</comment>
<dbReference type="EMBL" id="AE003852">
    <property type="protein sequence ID" value="AAF94065.1"/>
    <property type="status" value="ALT_INIT"/>
    <property type="molecule type" value="Genomic_DNA"/>
</dbReference>
<dbReference type="PIR" id="G82265">
    <property type="entry name" value="G82265"/>
</dbReference>
<dbReference type="RefSeq" id="NP_230550.1">
    <property type="nucleotide sequence ID" value="NC_002505.1"/>
</dbReference>
<dbReference type="RefSeq" id="WP_000194668.1">
    <property type="nucleotide sequence ID" value="NZ_LT906614.1"/>
</dbReference>
<dbReference type="SMR" id="Q9KTJ9"/>
<dbReference type="STRING" id="243277.VC_0903"/>
<dbReference type="DNASU" id="2614194"/>
<dbReference type="EnsemblBacteria" id="AAF94065">
    <property type="protein sequence ID" value="AAF94065"/>
    <property type="gene ID" value="VC_0903"/>
</dbReference>
<dbReference type="KEGG" id="vch:VC_0903"/>
<dbReference type="PATRIC" id="fig|243277.26.peg.860"/>
<dbReference type="eggNOG" id="ENOG502ZCMR">
    <property type="taxonomic scope" value="Bacteria"/>
</dbReference>
<dbReference type="HOGENOM" id="CLU_121866_0_0_6"/>
<dbReference type="Proteomes" id="UP000000584">
    <property type="component" value="Chromosome 1"/>
</dbReference>
<dbReference type="GO" id="GO:0009898">
    <property type="term" value="C:cytoplasmic side of plasma membrane"/>
    <property type="evidence" value="ECO:0007669"/>
    <property type="project" value="InterPro"/>
</dbReference>
<dbReference type="CDD" id="cd16323">
    <property type="entry name" value="Syd"/>
    <property type="match status" value="1"/>
</dbReference>
<dbReference type="Gene3D" id="3.40.1580.20">
    <property type="entry name" value="Syd protein"/>
    <property type="match status" value="1"/>
</dbReference>
<dbReference type="HAMAP" id="MF_01104">
    <property type="entry name" value="Syd"/>
    <property type="match status" value="1"/>
</dbReference>
<dbReference type="InterPro" id="IPR009948">
    <property type="entry name" value="Syd"/>
</dbReference>
<dbReference type="InterPro" id="IPR038228">
    <property type="entry name" value="Syd_sf"/>
</dbReference>
<dbReference type="NCBIfam" id="NF003439">
    <property type="entry name" value="PRK04968.1"/>
    <property type="match status" value="1"/>
</dbReference>
<dbReference type="Pfam" id="PF07348">
    <property type="entry name" value="Syd"/>
    <property type="match status" value="1"/>
</dbReference>
<accession>Q9KTJ9</accession>
<organism>
    <name type="scientific">Vibrio cholerae serotype O1 (strain ATCC 39315 / El Tor Inaba N16961)</name>
    <dbReference type="NCBI Taxonomy" id="243277"/>
    <lineage>
        <taxon>Bacteria</taxon>
        <taxon>Pseudomonadati</taxon>
        <taxon>Pseudomonadota</taxon>
        <taxon>Gammaproteobacteria</taxon>
        <taxon>Vibrionales</taxon>
        <taxon>Vibrionaceae</taxon>
        <taxon>Vibrio</taxon>
    </lineage>
</organism>
<keyword id="KW-0997">Cell inner membrane</keyword>
<keyword id="KW-1003">Cell membrane</keyword>
<keyword id="KW-0472">Membrane</keyword>
<keyword id="KW-1185">Reference proteome</keyword>
<proteinExistence type="inferred from homology"/>
<gene>
    <name evidence="1" type="primary">syd</name>
    <name type="ordered locus">VC_0903</name>
</gene>
<protein>
    <recommendedName>
        <fullName evidence="1">Protein Syd</fullName>
    </recommendedName>
</protein>